<protein>
    <recommendedName>
        <fullName evidence="1">Phosphoglycerol transferase I</fullName>
        <ecNumber evidence="1">2.7.8.20</ecNumber>
    </recommendedName>
    <alternativeName>
        <fullName evidence="1">Phosphatidylglycerol--membrane-oligosaccharide glycerophosphotransferase</fullName>
    </alternativeName>
</protein>
<reference key="1">
    <citation type="journal article" date="2011" name="J. Bacteriol.">
        <title>Comparative genomics of 28 Salmonella enterica isolates: evidence for CRISPR-mediated adaptive sublineage evolution.</title>
        <authorList>
            <person name="Fricke W.F."/>
            <person name="Mammel M.K."/>
            <person name="McDermott P.F."/>
            <person name="Tartera C."/>
            <person name="White D.G."/>
            <person name="Leclerc J.E."/>
            <person name="Ravel J."/>
            <person name="Cebula T.A."/>
        </authorList>
    </citation>
    <scope>NUCLEOTIDE SEQUENCE [LARGE SCALE GENOMIC DNA]</scope>
    <source>
        <strain>CT_02021853</strain>
    </source>
</reference>
<accession>B5FTA1</accession>
<gene>
    <name evidence="1" type="primary">mdoB</name>
    <name evidence="1" type="synonym">opgB</name>
    <name type="ordered locus">SeD_A4955</name>
</gene>
<name>OPGB_SALDC</name>
<organism>
    <name type="scientific">Salmonella dublin (strain CT_02021853)</name>
    <dbReference type="NCBI Taxonomy" id="439851"/>
    <lineage>
        <taxon>Bacteria</taxon>
        <taxon>Pseudomonadati</taxon>
        <taxon>Pseudomonadota</taxon>
        <taxon>Gammaproteobacteria</taxon>
        <taxon>Enterobacterales</taxon>
        <taxon>Enterobacteriaceae</taxon>
        <taxon>Salmonella</taxon>
    </lineage>
</organism>
<dbReference type="EC" id="2.7.8.20" evidence="1"/>
<dbReference type="EMBL" id="CP001144">
    <property type="protein sequence ID" value="ACH74498.1"/>
    <property type="molecule type" value="Genomic_DNA"/>
</dbReference>
<dbReference type="RefSeq" id="WP_001292722.1">
    <property type="nucleotide sequence ID" value="NC_011205.1"/>
</dbReference>
<dbReference type="SMR" id="B5FTA1"/>
<dbReference type="KEGG" id="sed:SeD_A4955"/>
<dbReference type="HOGENOM" id="CLU_023986_1_0_6"/>
<dbReference type="UniPathway" id="UPA00637"/>
<dbReference type="Proteomes" id="UP000008322">
    <property type="component" value="Chromosome"/>
</dbReference>
<dbReference type="GO" id="GO:0005886">
    <property type="term" value="C:plasma membrane"/>
    <property type="evidence" value="ECO:0007669"/>
    <property type="project" value="UniProtKB-SubCell"/>
</dbReference>
<dbReference type="GO" id="GO:0008960">
    <property type="term" value="F:phosphatidylglycerol-membrane-oligosaccharide glycerophosphotransferase activity"/>
    <property type="evidence" value="ECO:0007669"/>
    <property type="project" value="UniProtKB-UniRule"/>
</dbReference>
<dbReference type="GO" id="GO:0009250">
    <property type="term" value="P:glucan biosynthetic process"/>
    <property type="evidence" value="ECO:0007669"/>
    <property type="project" value="UniProtKB-UniRule"/>
</dbReference>
<dbReference type="CDD" id="cd16015">
    <property type="entry name" value="LTA_synthase"/>
    <property type="match status" value="1"/>
</dbReference>
<dbReference type="FunFam" id="3.40.720.10:FF:000009">
    <property type="entry name" value="Phosphoglycerol transferase I"/>
    <property type="match status" value="1"/>
</dbReference>
<dbReference type="Gene3D" id="3.40.720.10">
    <property type="entry name" value="Alkaline Phosphatase, subunit A"/>
    <property type="match status" value="1"/>
</dbReference>
<dbReference type="HAMAP" id="MF_01070">
    <property type="entry name" value="MdoB_OpgB"/>
    <property type="match status" value="1"/>
</dbReference>
<dbReference type="InterPro" id="IPR017850">
    <property type="entry name" value="Alkaline_phosphatase_core_sf"/>
</dbReference>
<dbReference type="InterPro" id="IPR054288">
    <property type="entry name" value="DUF7024"/>
</dbReference>
<dbReference type="InterPro" id="IPR020881">
    <property type="entry name" value="OpgB"/>
</dbReference>
<dbReference type="InterPro" id="IPR050448">
    <property type="entry name" value="OpgB/LTA_synthase_biosynth"/>
</dbReference>
<dbReference type="InterPro" id="IPR000917">
    <property type="entry name" value="Sulfatase_N"/>
</dbReference>
<dbReference type="NCBIfam" id="NF003000">
    <property type="entry name" value="PRK03776.1"/>
    <property type="match status" value="1"/>
</dbReference>
<dbReference type="PANTHER" id="PTHR47371">
    <property type="entry name" value="LIPOTEICHOIC ACID SYNTHASE"/>
    <property type="match status" value="1"/>
</dbReference>
<dbReference type="PANTHER" id="PTHR47371:SF3">
    <property type="entry name" value="PHOSPHOGLYCEROL TRANSFERASE I"/>
    <property type="match status" value="1"/>
</dbReference>
<dbReference type="Pfam" id="PF22895">
    <property type="entry name" value="DUF7024"/>
    <property type="match status" value="1"/>
</dbReference>
<dbReference type="Pfam" id="PF00884">
    <property type="entry name" value="Sulfatase"/>
    <property type="match status" value="1"/>
</dbReference>
<dbReference type="SUPFAM" id="SSF53649">
    <property type="entry name" value="Alkaline phosphatase-like"/>
    <property type="match status" value="1"/>
</dbReference>
<evidence type="ECO:0000255" key="1">
    <source>
        <dbReference type="HAMAP-Rule" id="MF_01070"/>
    </source>
</evidence>
<comment type="function">
    <text evidence="1">Transfers a phosphoglycerol residue from phosphatidylglycerol to the membrane-bound nascent glucan backbones.</text>
</comment>
<comment type="catalytic activity">
    <reaction evidence="1">
        <text>a phosphatidylglycerol + a membrane-derived-oligosaccharide D-glucose = a 1,2-diacyl-sn-glycerol + a membrane-derived-oligosaccharide 6-(glycerophospho)-D-glucose.</text>
        <dbReference type="EC" id="2.7.8.20"/>
    </reaction>
</comment>
<comment type="pathway">
    <text evidence="1">Glycan metabolism; osmoregulated periplasmic glucan (OPG) biosynthesis.</text>
</comment>
<comment type="subcellular location">
    <subcellularLocation>
        <location evidence="1">Cell inner membrane</location>
        <topology evidence="1">Multi-pass membrane protein</topology>
    </subcellularLocation>
</comment>
<comment type="similarity">
    <text evidence="1">Belongs to the OpgB family.</text>
</comment>
<keyword id="KW-0997">Cell inner membrane</keyword>
<keyword id="KW-1003">Cell membrane</keyword>
<keyword id="KW-0472">Membrane</keyword>
<keyword id="KW-0808">Transferase</keyword>
<keyword id="KW-0812">Transmembrane</keyword>
<keyword id="KW-1133">Transmembrane helix</keyword>
<feature type="chain" id="PRO_1000136629" description="Phosphoglycerol transferase I">
    <location>
        <begin position="1"/>
        <end position="763"/>
    </location>
</feature>
<feature type="transmembrane region" description="Helical" evidence="1">
    <location>
        <begin position="1"/>
        <end position="21"/>
    </location>
</feature>
<feature type="transmembrane region" description="Helical" evidence="1">
    <location>
        <begin position="26"/>
        <end position="46"/>
    </location>
</feature>
<feature type="transmembrane region" description="Helical" evidence="1">
    <location>
        <begin position="77"/>
        <end position="97"/>
    </location>
</feature>
<feature type="transmembrane region" description="Helical" evidence="1">
    <location>
        <begin position="108"/>
        <end position="128"/>
    </location>
</feature>
<sequence>MSELLSVALFLASVLIYAWKAGRNTWWFAATLTVLGLFVILNITLYASDYFTGDGINDAVLYTLTNSLTGAGVGKYILPGIGIALALVAVFGALGWVLRRRRHHPHHVGYSLLALLLALGSVDASPAFRQITELVKSQMRDGDPDFAVYYKEPAKTIPNPKLNLVYIYGESLERTYFDNDAFPNLTPELGALKNEGLDFSHTMQLPGTDYTIAGMVASQCGIPLFAPFEGNASASVSSFFPQNICLGDILKNSGYQNYFVQGANLRFAGKDVFLKSHGFDHLYGAEELKTVVADPSYRNDWGFYDDTVLDEAWKKFEALSRSGQRFSLFTLTVDTHHPDGFISRTCNRKRYDYDGKPNQSFSAVSCSQENIAEFINKIKASPWFKDTVIVVSSDHLAMNNTAWKYLNKQDRNNLFFILRGDKPQQETLAVKRNTMDNGATVLDILGGDNFIGLGRSSLSGQSLSEVFLNVKEKVLAMKPDIIRLWNFPKEIKDFTVDRDKNMIAFSGSHFRLPLLLRVSDKRVEPLPESEYSAPLRFQLADFAPRDNFVWIDRCYKMAQLWAPALALSTDWCVSQGQLGGQQTVQHVDKAQWKGKTAFKETVIDVTRYQGNVDTLKIVDNDIRYKADSFIFNVAGAPEEVKQFSGISRPESWGRWSNAQLGDEVKIEYKAPLPKKFDLVITAKAFGDNANRPIPVRVGNEEQTLVLGHDVSTITLHFNNPTDANTLVIAPPAPVSTNEGNILGHSPRKLGIGMVEIKVVNVES</sequence>
<proteinExistence type="inferred from homology"/>